<keyword id="KW-0548">Nucleotidyltransferase</keyword>
<keyword id="KW-1185">Reference proteome</keyword>
<keyword id="KW-0694">RNA-binding</keyword>
<keyword id="KW-0698">rRNA processing</keyword>
<keyword id="KW-0808">Transferase</keyword>
<keyword id="KW-0819">tRNA processing</keyword>
<keyword id="KW-0820">tRNA-binding</keyword>
<accession>Q0KD27</accession>
<comment type="function">
    <text evidence="1">Phosphorolytic 3'-5' exoribonuclease that plays an important role in tRNA 3'-end maturation. Removes nucleotide residues following the 3'-CCA terminus of tRNAs; can also add nucleotides to the ends of RNA molecules by using nucleoside diphosphates as substrates, but this may not be physiologically important. Probably plays a role in initiation of 16S rRNA degradation (leading to ribosome degradation) during starvation.</text>
</comment>
<comment type="catalytic activity">
    <reaction evidence="1">
        <text>tRNA(n+1) + phosphate = tRNA(n) + a ribonucleoside 5'-diphosphate</text>
        <dbReference type="Rhea" id="RHEA:10628"/>
        <dbReference type="Rhea" id="RHEA-COMP:17343"/>
        <dbReference type="Rhea" id="RHEA-COMP:17344"/>
        <dbReference type="ChEBI" id="CHEBI:43474"/>
        <dbReference type="ChEBI" id="CHEBI:57930"/>
        <dbReference type="ChEBI" id="CHEBI:173114"/>
        <dbReference type="EC" id="2.7.7.56"/>
    </reaction>
</comment>
<comment type="subunit">
    <text evidence="1">Homohexameric ring arranged as a trimer of dimers.</text>
</comment>
<comment type="similarity">
    <text evidence="1">Belongs to the RNase PH family.</text>
</comment>
<proteinExistence type="inferred from homology"/>
<feature type="chain" id="PRO_1000024859" description="Ribonuclease PH">
    <location>
        <begin position="1"/>
        <end position="239"/>
    </location>
</feature>
<feature type="binding site" evidence="1">
    <location>
        <position position="86"/>
    </location>
    <ligand>
        <name>phosphate</name>
        <dbReference type="ChEBI" id="CHEBI:43474"/>
        <note>substrate</note>
    </ligand>
</feature>
<feature type="binding site" evidence="1">
    <location>
        <begin position="124"/>
        <end position="126"/>
    </location>
    <ligand>
        <name>phosphate</name>
        <dbReference type="ChEBI" id="CHEBI:43474"/>
        <note>substrate</note>
    </ligand>
</feature>
<dbReference type="EC" id="2.7.7.56" evidence="1"/>
<dbReference type="EMBL" id="AM260479">
    <property type="protein sequence ID" value="CAJ92094.1"/>
    <property type="molecule type" value="Genomic_DNA"/>
</dbReference>
<dbReference type="RefSeq" id="WP_010809229.1">
    <property type="nucleotide sequence ID" value="NZ_CP039287.1"/>
</dbReference>
<dbReference type="SMR" id="Q0KD27"/>
<dbReference type="STRING" id="381666.H16_A0949"/>
<dbReference type="KEGG" id="reh:H16_A0949"/>
<dbReference type="eggNOG" id="COG0689">
    <property type="taxonomic scope" value="Bacteria"/>
</dbReference>
<dbReference type="HOGENOM" id="CLU_050858_0_0_4"/>
<dbReference type="OrthoDB" id="9802265at2"/>
<dbReference type="Proteomes" id="UP000008210">
    <property type="component" value="Chromosome 1"/>
</dbReference>
<dbReference type="GO" id="GO:0000175">
    <property type="term" value="F:3'-5'-RNA exonuclease activity"/>
    <property type="evidence" value="ECO:0007669"/>
    <property type="project" value="UniProtKB-UniRule"/>
</dbReference>
<dbReference type="GO" id="GO:0000049">
    <property type="term" value="F:tRNA binding"/>
    <property type="evidence" value="ECO:0007669"/>
    <property type="project" value="UniProtKB-UniRule"/>
</dbReference>
<dbReference type="GO" id="GO:0009022">
    <property type="term" value="F:tRNA nucleotidyltransferase activity"/>
    <property type="evidence" value="ECO:0007669"/>
    <property type="project" value="UniProtKB-UniRule"/>
</dbReference>
<dbReference type="GO" id="GO:0016075">
    <property type="term" value="P:rRNA catabolic process"/>
    <property type="evidence" value="ECO:0007669"/>
    <property type="project" value="UniProtKB-UniRule"/>
</dbReference>
<dbReference type="GO" id="GO:0006364">
    <property type="term" value="P:rRNA processing"/>
    <property type="evidence" value="ECO:0007669"/>
    <property type="project" value="UniProtKB-KW"/>
</dbReference>
<dbReference type="GO" id="GO:0008033">
    <property type="term" value="P:tRNA processing"/>
    <property type="evidence" value="ECO:0007669"/>
    <property type="project" value="UniProtKB-UniRule"/>
</dbReference>
<dbReference type="CDD" id="cd11362">
    <property type="entry name" value="RNase_PH_bact"/>
    <property type="match status" value="1"/>
</dbReference>
<dbReference type="FunFam" id="3.30.230.70:FF:000003">
    <property type="entry name" value="Ribonuclease PH"/>
    <property type="match status" value="1"/>
</dbReference>
<dbReference type="Gene3D" id="3.30.230.70">
    <property type="entry name" value="GHMP Kinase, N-terminal domain"/>
    <property type="match status" value="1"/>
</dbReference>
<dbReference type="HAMAP" id="MF_00564">
    <property type="entry name" value="RNase_PH"/>
    <property type="match status" value="1"/>
</dbReference>
<dbReference type="InterPro" id="IPR001247">
    <property type="entry name" value="ExoRNase_PH_dom1"/>
</dbReference>
<dbReference type="InterPro" id="IPR015847">
    <property type="entry name" value="ExoRNase_PH_dom2"/>
</dbReference>
<dbReference type="InterPro" id="IPR036345">
    <property type="entry name" value="ExoRNase_PH_dom2_sf"/>
</dbReference>
<dbReference type="InterPro" id="IPR027408">
    <property type="entry name" value="PNPase/RNase_PH_dom_sf"/>
</dbReference>
<dbReference type="InterPro" id="IPR020568">
    <property type="entry name" value="Ribosomal_Su5_D2-typ_SF"/>
</dbReference>
<dbReference type="InterPro" id="IPR050080">
    <property type="entry name" value="RNase_PH"/>
</dbReference>
<dbReference type="InterPro" id="IPR002381">
    <property type="entry name" value="RNase_PH_bac-type"/>
</dbReference>
<dbReference type="InterPro" id="IPR018336">
    <property type="entry name" value="RNase_PH_CS"/>
</dbReference>
<dbReference type="NCBIfam" id="TIGR01966">
    <property type="entry name" value="RNasePH"/>
    <property type="match status" value="1"/>
</dbReference>
<dbReference type="PANTHER" id="PTHR11953">
    <property type="entry name" value="EXOSOME COMPLEX COMPONENT"/>
    <property type="match status" value="1"/>
</dbReference>
<dbReference type="PANTHER" id="PTHR11953:SF0">
    <property type="entry name" value="EXOSOME COMPLEX COMPONENT RRP41"/>
    <property type="match status" value="1"/>
</dbReference>
<dbReference type="Pfam" id="PF01138">
    <property type="entry name" value="RNase_PH"/>
    <property type="match status" value="1"/>
</dbReference>
<dbReference type="Pfam" id="PF03725">
    <property type="entry name" value="RNase_PH_C"/>
    <property type="match status" value="1"/>
</dbReference>
<dbReference type="SUPFAM" id="SSF55666">
    <property type="entry name" value="Ribonuclease PH domain 2-like"/>
    <property type="match status" value="1"/>
</dbReference>
<dbReference type="SUPFAM" id="SSF54211">
    <property type="entry name" value="Ribosomal protein S5 domain 2-like"/>
    <property type="match status" value="1"/>
</dbReference>
<dbReference type="PROSITE" id="PS01277">
    <property type="entry name" value="RIBONUCLEASE_PH"/>
    <property type="match status" value="1"/>
</dbReference>
<sequence length="239" mass="25220">MRPSGRAADALRSISLTRHYTRHAEGSVLCAFGDTKVLCTASVLAKVPPHKKGSGEGWVTAEYGMLPRATHTRSDREAARGKQTGRTQEIQRLIGRAMRSVFDLAALGEYTVHLDCDVLQADGGTRTAAITGAFVAAHDAVSTMLRDGLIAASPIRDHVAAVSVGMVDGVPVLDLDYAEDSSCDTDMNVVMTGSGGFVEVQGTAEGAPFSRADLDAMTRLAEAGIARLVQHQREALGLA</sequence>
<reference key="1">
    <citation type="journal article" date="2006" name="Nat. Biotechnol.">
        <title>Genome sequence of the bioplastic-producing 'Knallgas' bacterium Ralstonia eutropha H16.</title>
        <authorList>
            <person name="Pohlmann A."/>
            <person name="Fricke W.F."/>
            <person name="Reinecke F."/>
            <person name="Kusian B."/>
            <person name="Liesegang H."/>
            <person name="Cramm R."/>
            <person name="Eitinger T."/>
            <person name="Ewering C."/>
            <person name="Poetter M."/>
            <person name="Schwartz E."/>
            <person name="Strittmatter A."/>
            <person name="Voss I."/>
            <person name="Gottschalk G."/>
            <person name="Steinbuechel A."/>
            <person name="Friedrich B."/>
            <person name="Bowien B."/>
        </authorList>
    </citation>
    <scope>NUCLEOTIDE SEQUENCE [LARGE SCALE GENOMIC DNA]</scope>
    <source>
        <strain>ATCC 17699 / DSM 428 / KCTC 22496 / NCIMB 10442 / H16 / Stanier 337</strain>
    </source>
</reference>
<name>RNPH_CUPNH</name>
<protein>
    <recommendedName>
        <fullName evidence="1">Ribonuclease PH</fullName>
        <shortName evidence="1">RNase PH</shortName>
        <ecNumber evidence="1">2.7.7.56</ecNumber>
    </recommendedName>
    <alternativeName>
        <fullName evidence="1">tRNA nucleotidyltransferase</fullName>
    </alternativeName>
</protein>
<organism>
    <name type="scientific">Cupriavidus necator (strain ATCC 17699 / DSM 428 / KCTC 22496 / NCIMB 10442 / H16 / Stanier 337)</name>
    <name type="common">Ralstonia eutropha</name>
    <dbReference type="NCBI Taxonomy" id="381666"/>
    <lineage>
        <taxon>Bacteria</taxon>
        <taxon>Pseudomonadati</taxon>
        <taxon>Pseudomonadota</taxon>
        <taxon>Betaproteobacteria</taxon>
        <taxon>Burkholderiales</taxon>
        <taxon>Burkholderiaceae</taxon>
        <taxon>Cupriavidus</taxon>
    </lineage>
</organism>
<gene>
    <name evidence="1" type="primary">rph</name>
    <name type="ordered locus">H16_A0949</name>
</gene>
<evidence type="ECO:0000255" key="1">
    <source>
        <dbReference type="HAMAP-Rule" id="MF_00564"/>
    </source>
</evidence>